<proteinExistence type="inferred from homology"/>
<keyword id="KW-0021">Allosteric enzyme</keyword>
<keyword id="KW-0067">ATP-binding</keyword>
<keyword id="KW-0963">Cytoplasm</keyword>
<keyword id="KW-0418">Kinase</keyword>
<keyword id="KW-0547">Nucleotide-binding</keyword>
<keyword id="KW-0665">Pyrimidine biosynthesis</keyword>
<keyword id="KW-0808">Transferase</keyword>
<dbReference type="EC" id="2.7.4.22" evidence="1"/>
<dbReference type="EMBL" id="CP000661">
    <property type="protein sequence ID" value="ABP71043.1"/>
    <property type="molecule type" value="Genomic_DNA"/>
</dbReference>
<dbReference type="SMR" id="A4WUH9"/>
<dbReference type="STRING" id="349102.Rsph17025_2153"/>
<dbReference type="KEGG" id="rsq:Rsph17025_2153"/>
<dbReference type="eggNOG" id="COG0528">
    <property type="taxonomic scope" value="Bacteria"/>
</dbReference>
<dbReference type="HOGENOM" id="CLU_033861_0_0_5"/>
<dbReference type="BioCyc" id="RSPH349102:G1G8M-2222-MONOMER"/>
<dbReference type="UniPathway" id="UPA00159">
    <property type="reaction ID" value="UER00275"/>
</dbReference>
<dbReference type="GO" id="GO:0005737">
    <property type="term" value="C:cytoplasm"/>
    <property type="evidence" value="ECO:0007669"/>
    <property type="project" value="UniProtKB-SubCell"/>
</dbReference>
<dbReference type="GO" id="GO:0005524">
    <property type="term" value="F:ATP binding"/>
    <property type="evidence" value="ECO:0007669"/>
    <property type="project" value="UniProtKB-KW"/>
</dbReference>
<dbReference type="GO" id="GO:0033862">
    <property type="term" value="F:UMP kinase activity"/>
    <property type="evidence" value="ECO:0007669"/>
    <property type="project" value="UniProtKB-EC"/>
</dbReference>
<dbReference type="GO" id="GO:0044210">
    <property type="term" value="P:'de novo' CTP biosynthetic process"/>
    <property type="evidence" value="ECO:0007669"/>
    <property type="project" value="UniProtKB-UniRule"/>
</dbReference>
<dbReference type="GO" id="GO:0006225">
    <property type="term" value="P:UDP biosynthetic process"/>
    <property type="evidence" value="ECO:0007669"/>
    <property type="project" value="TreeGrafter"/>
</dbReference>
<dbReference type="CDD" id="cd04254">
    <property type="entry name" value="AAK_UMPK-PyrH-Ec"/>
    <property type="match status" value="1"/>
</dbReference>
<dbReference type="FunFam" id="3.40.1160.10:FF:000001">
    <property type="entry name" value="Uridylate kinase"/>
    <property type="match status" value="1"/>
</dbReference>
<dbReference type="Gene3D" id="3.40.1160.10">
    <property type="entry name" value="Acetylglutamate kinase-like"/>
    <property type="match status" value="1"/>
</dbReference>
<dbReference type="HAMAP" id="MF_01220_B">
    <property type="entry name" value="PyrH_B"/>
    <property type="match status" value="1"/>
</dbReference>
<dbReference type="InterPro" id="IPR036393">
    <property type="entry name" value="AceGlu_kinase-like_sf"/>
</dbReference>
<dbReference type="InterPro" id="IPR001048">
    <property type="entry name" value="Asp/Glu/Uridylate_kinase"/>
</dbReference>
<dbReference type="InterPro" id="IPR011817">
    <property type="entry name" value="Uridylate_kinase"/>
</dbReference>
<dbReference type="InterPro" id="IPR015963">
    <property type="entry name" value="Uridylate_kinase_bac"/>
</dbReference>
<dbReference type="NCBIfam" id="TIGR02075">
    <property type="entry name" value="pyrH_bact"/>
    <property type="match status" value="1"/>
</dbReference>
<dbReference type="PANTHER" id="PTHR42833">
    <property type="entry name" value="URIDYLATE KINASE"/>
    <property type="match status" value="1"/>
</dbReference>
<dbReference type="PANTHER" id="PTHR42833:SF4">
    <property type="entry name" value="URIDYLATE KINASE PUMPKIN, CHLOROPLASTIC"/>
    <property type="match status" value="1"/>
</dbReference>
<dbReference type="Pfam" id="PF00696">
    <property type="entry name" value="AA_kinase"/>
    <property type="match status" value="1"/>
</dbReference>
<dbReference type="PIRSF" id="PIRSF005650">
    <property type="entry name" value="Uridylate_kin"/>
    <property type="match status" value="1"/>
</dbReference>
<dbReference type="SUPFAM" id="SSF53633">
    <property type="entry name" value="Carbamate kinase-like"/>
    <property type="match status" value="1"/>
</dbReference>
<protein>
    <recommendedName>
        <fullName evidence="1">Uridylate kinase</fullName>
        <shortName evidence="1">UK</shortName>
        <ecNumber evidence="1">2.7.4.22</ecNumber>
    </recommendedName>
    <alternativeName>
        <fullName evidence="1">Uridine monophosphate kinase</fullName>
        <shortName evidence="1">UMP kinase</shortName>
        <shortName evidence="1">UMPK</shortName>
    </alternativeName>
</protein>
<evidence type="ECO:0000255" key="1">
    <source>
        <dbReference type="HAMAP-Rule" id="MF_01220"/>
    </source>
</evidence>
<organism>
    <name type="scientific">Cereibacter sphaeroides (strain ATCC 17025 / ATH 2.4.3)</name>
    <name type="common">Rhodobacter sphaeroides</name>
    <dbReference type="NCBI Taxonomy" id="349102"/>
    <lineage>
        <taxon>Bacteria</taxon>
        <taxon>Pseudomonadati</taxon>
        <taxon>Pseudomonadota</taxon>
        <taxon>Alphaproteobacteria</taxon>
        <taxon>Rhodobacterales</taxon>
        <taxon>Paracoccaceae</taxon>
        <taxon>Cereibacter</taxon>
    </lineage>
</organism>
<name>PYRH_CERS5</name>
<feature type="chain" id="PRO_0000323934" description="Uridylate kinase">
    <location>
        <begin position="1"/>
        <end position="246"/>
    </location>
</feature>
<feature type="region of interest" description="Involved in allosteric activation by GTP" evidence="1">
    <location>
        <begin position="28"/>
        <end position="33"/>
    </location>
</feature>
<feature type="binding site" evidence="1">
    <location>
        <begin position="20"/>
        <end position="23"/>
    </location>
    <ligand>
        <name>ATP</name>
        <dbReference type="ChEBI" id="CHEBI:30616"/>
    </ligand>
</feature>
<feature type="binding site" evidence="1">
    <location>
        <position position="62"/>
    </location>
    <ligand>
        <name>UMP</name>
        <dbReference type="ChEBI" id="CHEBI:57865"/>
    </ligand>
</feature>
<feature type="binding site" evidence="1">
    <location>
        <position position="63"/>
    </location>
    <ligand>
        <name>ATP</name>
        <dbReference type="ChEBI" id="CHEBI:30616"/>
    </ligand>
</feature>
<feature type="binding site" evidence="1">
    <location>
        <position position="67"/>
    </location>
    <ligand>
        <name>ATP</name>
        <dbReference type="ChEBI" id="CHEBI:30616"/>
    </ligand>
</feature>
<feature type="binding site" evidence="1">
    <location>
        <position position="82"/>
    </location>
    <ligand>
        <name>UMP</name>
        <dbReference type="ChEBI" id="CHEBI:57865"/>
    </ligand>
</feature>
<feature type="binding site" evidence="1">
    <location>
        <begin position="143"/>
        <end position="150"/>
    </location>
    <ligand>
        <name>UMP</name>
        <dbReference type="ChEBI" id="CHEBI:57865"/>
    </ligand>
</feature>
<feature type="binding site" evidence="1">
    <location>
        <position position="170"/>
    </location>
    <ligand>
        <name>ATP</name>
        <dbReference type="ChEBI" id="CHEBI:30616"/>
    </ligand>
</feature>
<feature type="binding site" evidence="1">
    <location>
        <position position="176"/>
    </location>
    <ligand>
        <name>ATP</name>
        <dbReference type="ChEBI" id="CHEBI:30616"/>
    </ligand>
</feature>
<feature type="binding site" evidence="1">
    <location>
        <position position="179"/>
    </location>
    <ligand>
        <name>ATP</name>
        <dbReference type="ChEBI" id="CHEBI:30616"/>
    </ligand>
</feature>
<gene>
    <name evidence="1" type="primary">pyrH</name>
    <name type="ordered locus">Rsph17025_2153</name>
</gene>
<sequence>MTSEAAPASTAVTYKRVMLKISGEALMGDQGYGLHPPTVQRIAREVQAVHRLGVEICMVIGGGNIFRGLQGSAQGMERTTADYMGMLATVMNALAMQAALESLGIFTRVISAIPMDQVCEPYIRRRAVRHLEKKRVCIFAAGTGNPYFTTDTAATLRANEMACQAIFKGTKVDGVYDKDPRKFADARRYETVSYDECLQKHLGVMDASAIALARDNDLPIIVFSLDEPGGFCGILRGEGTYTRVQG</sequence>
<comment type="function">
    <text evidence="1">Catalyzes the reversible phosphorylation of UMP to UDP.</text>
</comment>
<comment type="catalytic activity">
    <reaction evidence="1">
        <text>UMP + ATP = UDP + ADP</text>
        <dbReference type="Rhea" id="RHEA:24400"/>
        <dbReference type="ChEBI" id="CHEBI:30616"/>
        <dbReference type="ChEBI" id="CHEBI:57865"/>
        <dbReference type="ChEBI" id="CHEBI:58223"/>
        <dbReference type="ChEBI" id="CHEBI:456216"/>
        <dbReference type="EC" id="2.7.4.22"/>
    </reaction>
</comment>
<comment type="activity regulation">
    <text evidence="1">Allosterically activated by GTP. Inhibited by UTP.</text>
</comment>
<comment type="pathway">
    <text evidence="1">Pyrimidine metabolism; CTP biosynthesis via de novo pathway; UDP from UMP (UMPK route): step 1/1.</text>
</comment>
<comment type="subunit">
    <text evidence="1">Homohexamer.</text>
</comment>
<comment type="subcellular location">
    <subcellularLocation>
        <location evidence="1">Cytoplasm</location>
    </subcellularLocation>
</comment>
<comment type="similarity">
    <text evidence="1">Belongs to the UMP kinase family.</text>
</comment>
<reference key="1">
    <citation type="submission" date="2007-04" db="EMBL/GenBank/DDBJ databases">
        <title>Complete sequence of chromosome of Rhodobacter sphaeroides ATCC 17025.</title>
        <authorList>
            <consortium name="US DOE Joint Genome Institute"/>
            <person name="Copeland A."/>
            <person name="Lucas S."/>
            <person name="Lapidus A."/>
            <person name="Barry K."/>
            <person name="Detter J.C."/>
            <person name="Glavina del Rio T."/>
            <person name="Hammon N."/>
            <person name="Israni S."/>
            <person name="Dalin E."/>
            <person name="Tice H."/>
            <person name="Pitluck S."/>
            <person name="Chertkov O."/>
            <person name="Brettin T."/>
            <person name="Bruce D."/>
            <person name="Han C."/>
            <person name="Schmutz J."/>
            <person name="Larimer F."/>
            <person name="Land M."/>
            <person name="Hauser L."/>
            <person name="Kyrpides N."/>
            <person name="Kim E."/>
            <person name="Richardson P."/>
            <person name="Mackenzie C."/>
            <person name="Choudhary M."/>
            <person name="Donohue T.J."/>
            <person name="Kaplan S."/>
        </authorList>
    </citation>
    <scope>NUCLEOTIDE SEQUENCE [LARGE SCALE GENOMIC DNA]</scope>
    <source>
        <strain>ATCC 17025 / ATH 2.4.3</strain>
    </source>
</reference>
<accession>A4WUH9</accession>